<proteinExistence type="inferred from homology"/>
<keyword id="KW-0408">Iron</keyword>
<keyword id="KW-0479">Metal-binding</keyword>
<name>CYAY_HISS2</name>
<comment type="function">
    <text evidence="1">Involved in iron-sulfur (Fe-S) cluster assembly. May act as a regulator of Fe-S biogenesis.</text>
</comment>
<comment type="similarity">
    <text evidence="1">Belongs to the frataxin family.</text>
</comment>
<evidence type="ECO:0000255" key="1">
    <source>
        <dbReference type="HAMAP-Rule" id="MF_00142"/>
    </source>
</evidence>
<protein>
    <recommendedName>
        <fullName evidence="1">Iron-sulfur cluster assembly protein CyaY</fullName>
    </recommendedName>
</protein>
<sequence length="102" mass="11749">MNIAEYHQNIEQVWLQIEEQLEEQGCDVDCDTQGSVFTITFADRSQIVVNKQEPLLELWLASKAGGFHFAFKNNQWIAQDGKLFWQCLEQACLAHGEQVNFS</sequence>
<organism>
    <name type="scientific">Histophilus somni (strain 2336)</name>
    <name type="common">Haemophilus somnus</name>
    <dbReference type="NCBI Taxonomy" id="228400"/>
    <lineage>
        <taxon>Bacteria</taxon>
        <taxon>Pseudomonadati</taxon>
        <taxon>Pseudomonadota</taxon>
        <taxon>Gammaproteobacteria</taxon>
        <taxon>Pasteurellales</taxon>
        <taxon>Pasteurellaceae</taxon>
        <taxon>Histophilus</taxon>
    </lineage>
</organism>
<gene>
    <name evidence="1" type="primary">cyaY</name>
    <name type="ordered locus">HSM_1863</name>
</gene>
<feature type="chain" id="PRO_1000076543" description="Iron-sulfur cluster assembly protein CyaY">
    <location>
        <begin position="1"/>
        <end position="102"/>
    </location>
</feature>
<reference key="1">
    <citation type="submission" date="2008-02" db="EMBL/GenBank/DDBJ databases">
        <title>Complete sequence of Haemophilus somnus 2336.</title>
        <authorList>
            <consortium name="US DOE Joint Genome Institute"/>
            <person name="Siddaramappa S."/>
            <person name="Duncan A.J."/>
            <person name="Challacombe J.F."/>
            <person name="Rainey D."/>
            <person name="Gillaspy A.F."/>
            <person name="Carson M."/>
            <person name="Gipson J."/>
            <person name="Gipson M."/>
            <person name="Bruce D."/>
            <person name="Detter J.C."/>
            <person name="Han C.S."/>
            <person name="Land M."/>
            <person name="Tapia R."/>
            <person name="Thompson L.S."/>
            <person name="Orvis J."/>
            <person name="Zaitshik J."/>
            <person name="Barnes G."/>
            <person name="Brettin T.S."/>
            <person name="Dyer D.W."/>
            <person name="Inzana T.J."/>
        </authorList>
    </citation>
    <scope>NUCLEOTIDE SEQUENCE [LARGE SCALE GENOMIC DNA]</scope>
    <source>
        <strain>2336</strain>
    </source>
</reference>
<accession>B0UWH8</accession>
<dbReference type="EMBL" id="CP000947">
    <property type="protein sequence ID" value="ACA31653.1"/>
    <property type="molecule type" value="Genomic_DNA"/>
</dbReference>
<dbReference type="RefSeq" id="WP_012340953.1">
    <property type="nucleotide sequence ID" value="NC_010519.1"/>
</dbReference>
<dbReference type="SMR" id="B0UWH8"/>
<dbReference type="STRING" id="228400.HSM_1863"/>
<dbReference type="GeneID" id="31488172"/>
<dbReference type="KEGG" id="hsm:HSM_1863"/>
<dbReference type="HOGENOM" id="CLU_080880_3_0_6"/>
<dbReference type="GO" id="GO:0005829">
    <property type="term" value="C:cytosol"/>
    <property type="evidence" value="ECO:0007669"/>
    <property type="project" value="TreeGrafter"/>
</dbReference>
<dbReference type="GO" id="GO:0008199">
    <property type="term" value="F:ferric iron binding"/>
    <property type="evidence" value="ECO:0007669"/>
    <property type="project" value="InterPro"/>
</dbReference>
<dbReference type="GO" id="GO:0008198">
    <property type="term" value="F:ferrous iron binding"/>
    <property type="evidence" value="ECO:0007669"/>
    <property type="project" value="TreeGrafter"/>
</dbReference>
<dbReference type="GO" id="GO:0016226">
    <property type="term" value="P:iron-sulfur cluster assembly"/>
    <property type="evidence" value="ECO:0007669"/>
    <property type="project" value="UniProtKB-UniRule"/>
</dbReference>
<dbReference type="CDD" id="cd00503">
    <property type="entry name" value="Frataxin"/>
    <property type="match status" value="1"/>
</dbReference>
<dbReference type="Gene3D" id="3.30.920.10">
    <property type="entry name" value="Frataxin/CyaY"/>
    <property type="match status" value="1"/>
</dbReference>
<dbReference type="HAMAP" id="MF_00142">
    <property type="entry name" value="CyaY"/>
    <property type="match status" value="1"/>
</dbReference>
<dbReference type="InterPro" id="IPR047584">
    <property type="entry name" value="CyaY"/>
</dbReference>
<dbReference type="InterPro" id="IPR002908">
    <property type="entry name" value="Frataxin/CyaY"/>
</dbReference>
<dbReference type="InterPro" id="IPR036524">
    <property type="entry name" value="Frataxin/CyaY_sf"/>
</dbReference>
<dbReference type="InterPro" id="IPR020895">
    <property type="entry name" value="Frataxin_CS"/>
</dbReference>
<dbReference type="NCBIfam" id="TIGR03421">
    <property type="entry name" value="FeS_CyaY"/>
    <property type="match status" value="1"/>
</dbReference>
<dbReference type="PANTHER" id="PTHR16821">
    <property type="entry name" value="FRATAXIN"/>
    <property type="match status" value="1"/>
</dbReference>
<dbReference type="PANTHER" id="PTHR16821:SF2">
    <property type="entry name" value="FRATAXIN, MITOCHONDRIAL"/>
    <property type="match status" value="1"/>
</dbReference>
<dbReference type="Pfam" id="PF01491">
    <property type="entry name" value="Frataxin_Cyay"/>
    <property type="match status" value="1"/>
</dbReference>
<dbReference type="SMART" id="SM01219">
    <property type="entry name" value="Frataxin_Cyay"/>
    <property type="match status" value="1"/>
</dbReference>
<dbReference type="SUPFAM" id="SSF55387">
    <property type="entry name" value="Frataxin/Nqo15-like"/>
    <property type="match status" value="1"/>
</dbReference>
<dbReference type="PROSITE" id="PS01344">
    <property type="entry name" value="FRATAXIN_1"/>
    <property type="match status" value="1"/>
</dbReference>
<dbReference type="PROSITE" id="PS50810">
    <property type="entry name" value="FRATAXIN_2"/>
    <property type="match status" value="1"/>
</dbReference>